<name>MSHD_STANL</name>
<keyword id="KW-0012">Acyltransferase</keyword>
<keyword id="KW-1185">Reference proteome</keyword>
<keyword id="KW-0677">Repeat</keyword>
<keyword id="KW-0808">Transferase</keyword>
<gene>
    <name evidence="1" type="primary">mshD</name>
    <name type="ordered locus">Snas_6377</name>
</gene>
<organism>
    <name type="scientific">Stackebrandtia nassauensis (strain DSM 44728 / CIP 108903 / NRRL B-16338 / NBRC 102104 / LLR-40K-21)</name>
    <dbReference type="NCBI Taxonomy" id="446470"/>
    <lineage>
        <taxon>Bacteria</taxon>
        <taxon>Bacillati</taxon>
        <taxon>Actinomycetota</taxon>
        <taxon>Actinomycetes</taxon>
        <taxon>Glycomycetales</taxon>
        <taxon>Glycomycetaceae</taxon>
        <taxon>Stackebrandtia</taxon>
    </lineage>
</organism>
<comment type="function">
    <text evidence="1">Catalyzes the transfer of acetyl from acetyl-CoA to desacetylmycothiol (Cys-GlcN-Ins) to form mycothiol.</text>
</comment>
<comment type="catalytic activity">
    <reaction evidence="1">
        <text>1D-myo-inositol 2-(L-cysteinylamino)-2-deoxy-alpha-D-glucopyranoside + acetyl-CoA = mycothiol + CoA + H(+)</text>
        <dbReference type="Rhea" id="RHEA:26172"/>
        <dbReference type="ChEBI" id="CHEBI:15378"/>
        <dbReference type="ChEBI" id="CHEBI:16768"/>
        <dbReference type="ChEBI" id="CHEBI:57287"/>
        <dbReference type="ChEBI" id="CHEBI:57288"/>
        <dbReference type="ChEBI" id="CHEBI:58887"/>
        <dbReference type="EC" id="2.3.1.189"/>
    </reaction>
</comment>
<comment type="subunit">
    <text evidence="1">Monomer.</text>
</comment>
<comment type="similarity">
    <text evidence="1">Belongs to the acetyltransferase family. MshD subfamily.</text>
</comment>
<protein>
    <recommendedName>
        <fullName evidence="1">Mycothiol acetyltransferase</fullName>
        <shortName evidence="1">MSH acetyltransferase</shortName>
        <ecNumber evidence="1">2.3.1.189</ecNumber>
    </recommendedName>
    <alternativeName>
        <fullName evidence="1">Mycothiol synthase</fullName>
    </alternativeName>
</protein>
<accession>D3Q4A8</accession>
<proteinExistence type="inferred from homology"/>
<evidence type="ECO:0000255" key="1">
    <source>
        <dbReference type="HAMAP-Rule" id="MF_01698"/>
    </source>
</evidence>
<feature type="chain" id="PRO_0000400300" description="Mycothiol acetyltransferase">
    <location>
        <begin position="1"/>
        <end position="306"/>
    </location>
</feature>
<feature type="domain" description="N-acetyltransferase 1" evidence="1">
    <location>
        <begin position="5"/>
        <end position="157"/>
    </location>
</feature>
<feature type="domain" description="N-acetyltransferase 2" evidence="1">
    <location>
        <begin position="159"/>
        <end position="306"/>
    </location>
</feature>
<feature type="binding site" evidence="1">
    <location>
        <position position="36"/>
    </location>
    <ligand>
        <name>1D-myo-inositol 2-(L-cysteinylamino)-2-deoxy-alpha-D-glucopyranoside</name>
        <dbReference type="ChEBI" id="CHEBI:58887"/>
    </ligand>
</feature>
<feature type="binding site">
    <location>
        <begin position="82"/>
        <end position="84"/>
    </location>
    <ligand>
        <name>acetyl-CoA</name>
        <dbReference type="ChEBI" id="CHEBI:57288"/>
        <label>1</label>
    </ligand>
</feature>
<feature type="binding site" evidence="1">
    <location>
        <position position="186"/>
    </location>
    <ligand>
        <name>1D-myo-inositol 2-(L-cysteinylamino)-2-deoxy-alpha-D-glucopyranoside</name>
        <dbReference type="ChEBI" id="CHEBI:58887"/>
    </ligand>
</feature>
<feature type="binding site" evidence="1">
    <location>
        <position position="227"/>
    </location>
    <ligand>
        <name>1D-myo-inositol 2-(L-cysteinylamino)-2-deoxy-alpha-D-glucopyranoside</name>
        <dbReference type="ChEBI" id="CHEBI:58887"/>
    </ligand>
</feature>
<feature type="binding site" evidence="1">
    <location>
        <position position="238"/>
    </location>
    <ligand>
        <name>1D-myo-inositol 2-(L-cysteinylamino)-2-deoxy-alpha-D-glucopyranoside</name>
        <dbReference type="ChEBI" id="CHEBI:58887"/>
    </ligand>
</feature>
<feature type="binding site" evidence="1">
    <location>
        <begin position="242"/>
        <end position="244"/>
    </location>
    <ligand>
        <name>acetyl-CoA</name>
        <dbReference type="ChEBI" id="CHEBI:57288"/>
        <label>2</label>
    </ligand>
</feature>
<feature type="binding site" evidence="1">
    <location>
        <position position="276"/>
    </location>
    <ligand>
        <name>1D-myo-inositol 2-(L-cysteinylamino)-2-deoxy-alpha-D-glucopyranoside</name>
        <dbReference type="ChEBI" id="CHEBI:58887"/>
    </ligand>
</feature>
<feature type="binding site" evidence="1">
    <location>
        <begin position="281"/>
        <end position="286"/>
    </location>
    <ligand>
        <name>acetyl-CoA</name>
        <dbReference type="ChEBI" id="CHEBI:57288"/>
        <label>2</label>
    </ligand>
</feature>
<reference key="1">
    <citation type="journal article" date="2009" name="Stand. Genomic Sci.">
        <title>Complete genome sequence of Stackebrandtia nassauensis type strain (LLR-40K-21).</title>
        <authorList>
            <person name="Munk C."/>
            <person name="Lapidus A."/>
            <person name="Copeland A."/>
            <person name="Jando M."/>
            <person name="Mayilraj S."/>
            <person name="Glavina Del Rio T."/>
            <person name="Nolan M."/>
            <person name="Chen F."/>
            <person name="Lucas S."/>
            <person name="Tice H."/>
            <person name="Cheng J.F."/>
            <person name="Han C."/>
            <person name="Detter J.C."/>
            <person name="Bruce D."/>
            <person name="Goodwin L."/>
            <person name="Chain P."/>
            <person name="Pitluck S."/>
            <person name="Goker M."/>
            <person name="Ovchinikova G."/>
            <person name="Pati A."/>
            <person name="Ivanova N."/>
            <person name="Mavromatis K."/>
            <person name="Chen A."/>
            <person name="Palaniappan K."/>
            <person name="Land M."/>
            <person name="Hauser L."/>
            <person name="Chang Y.J."/>
            <person name="Jeffries C.D."/>
            <person name="Bristow J."/>
            <person name="Eisen J.A."/>
            <person name="Markowitz V."/>
            <person name="Hugenholtz P."/>
            <person name="Kyrpides N.C."/>
            <person name="Klenk H.P."/>
        </authorList>
    </citation>
    <scope>NUCLEOTIDE SEQUENCE [LARGE SCALE GENOMIC DNA]</scope>
    <source>
        <strain>DSM 44728 / CIP 108903 / NRRL B-16338 / NBRC 102104 / LLR-40K-21</strain>
    </source>
</reference>
<sequence>MIRVEIYERLEAAAVAEVLELVEAGARADGLSALNEQTILNLRHGGAEAEPGAHLMIRDAEGTLVGYANLELDNDGVAAVEMLVHPTHRHNGHGEALLAALIKRATAAKCRALTIWAHGDHPTALLLADRHDFTRDRVLWQMRRHLTDADGDGEPAAGITIRSFVPGRDETRLLEVNNAAFADHPDQGGWTVRDIAMREREDWFDPEGLLLAERDVDGQVLGFHWTKVHGSGDSAIGEIYVLGVAPEAQGLKLGAALTTAGLRYLRGRGLDTVMLYVDESNVRAVRLYTGAGFTRWTTDVNYHKKL</sequence>
<dbReference type="EC" id="2.3.1.189" evidence="1"/>
<dbReference type="EMBL" id="CP001778">
    <property type="protein sequence ID" value="ADD45993.1"/>
    <property type="molecule type" value="Genomic_DNA"/>
</dbReference>
<dbReference type="SMR" id="D3Q4A8"/>
<dbReference type="STRING" id="446470.Snas_6377"/>
<dbReference type="KEGG" id="sna:Snas_6377"/>
<dbReference type="eggNOG" id="COG0456">
    <property type="taxonomic scope" value="Bacteria"/>
</dbReference>
<dbReference type="HOGENOM" id="CLU_068014_0_0_11"/>
<dbReference type="Proteomes" id="UP000000844">
    <property type="component" value="Chromosome"/>
</dbReference>
<dbReference type="GO" id="GO:0035447">
    <property type="term" value="F:mycothiol synthase activity"/>
    <property type="evidence" value="ECO:0007669"/>
    <property type="project" value="UniProtKB-UniRule"/>
</dbReference>
<dbReference type="GO" id="GO:0010125">
    <property type="term" value="P:mycothiol biosynthetic process"/>
    <property type="evidence" value="ECO:0007669"/>
    <property type="project" value="UniProtKB-UniRule"/>
</dbReference>
<dbReference type="CDD" id="cd04301">
    <property type="entry name" value="NAT_SF"/>
    <property type="match status" value="2"/>
</dbReference>
<dbReference type="Gene3D" id="3.40.630.30">
    <property type="match status" value="1"/>
</dbReference>
<dbReference type="HAMAP" id="MF_01698">
    <property type="entry name" value="MshD"/>
    <property type="match status" value="1"/>
</dbReference>
<dbReference type="InterPro" id="IPR016181">
    <property type="entry name" value="Acyl_CoA_acyltransferase"/>
</dbReference>
<dbReference type="InterPro" id="IPR050832">
    <property type="entry name" value="Bact_Acetyltransf"/>
</dbReference>
<dbReference type="InterPro" id="IPR000182">
    <property type="entry name" value="GNAT_dom"/>
</dbReference>
<dbReference type="InterPro" id="IPR017813">
    <property type="entry name" value="Mycothiol_AcTrfase"/>
</dbReference>
<dbReference type="NCBIfam" id="TIGR03448">
    <property type="entry name" value="mycothiol_MshD"/>
    <property type="match status" value="1"/>
</dbReference>
<dbReference type="PANTHER" id="PTHR43877">
    <property type="entry name" value="AMINOALKYLPHOSPHONATE N-ACETYLTRANSFERASE-RELATED-RELATED"/>
    <property type="match status" value="1"/>
</dbReference>
<dbReference type="Pfam" id="PF00583">
    <property type="entry name" value="Acetyltransf_1"/>
    <property type="match status" value="2"/>
</dbReference>
<dbReference type="PIRSF" id="PIRSF021524">
    <property type="entry name" value="MSH_acetyltransferase"/>
    <property type="match status" value="1"/>
</dbReference>
<dbReference type="SUPFAM" id="SSF55729">
    <property type="entry name" value="Acyl-CoA N-acyltransferases (Nat)"/>
    <property type="match status" value="2"/>
</dbReference>
<dbReference type="PROSITE" id="PS51186">
    <property type="entry name" value="GNAT"/>
    <property type="match status" value="2"/>
</dbReference>